<organism>
    <name type="scientific">Haloarcula marismortui (strain ATCC 43049 / DSM 3752 / JCM 8966 / VKM B-1809)</name>
    <name type="common">Halobacterium marismortui</name>
    <dbReference type="NCBI Taxonomy" id="272569"/>
    <lineage>
        <taxon>Archaea</taxon>
        <taxon>Methanobacteriati</taxon>
        <taxon>Methanobacteriota</taxon>
        <taxon>Stenosarchaea group</taxon>
        <taxon>Halobacteria</taxon>
        <taxon>Halobacteriales</taxon>
        <taxon>Haloarculaceae</taxon>
        <taxon>Haloarcula</taxon>
    </lineage>
</organism>
<reference key="1">
    <citation type="journal article" date="2004" name="Genome Res.">
        <title>Genome sequence of Haloarcula marismortui: a halophilic archaeon from the Dead Sea.</title>
        <authorList>
            <person name="Baliga N.S."/>
            <person name="Bonneau R."/>
            <person name="Facciotti M.T."/>
            <person name="Pan M."/>
            <person name="Glusman G."/>
            <person name="Deutsch E.W."/>
            <person name="Shannon P."/>
            <person name="Chiu Y."/>
            <person name="Weng R.S."/>
            <person name="Gan R.R."/>
            <person name="Hung P."/>
            <person name="Date S.V."/>
            <person name="Marcotte E."/>
            <person name="Hood L."/>
            <person name="Ng W.V."/>
        </authorList>
    </citation>
    <scope>NUCLEOTIDE SEQUENCE [LARGE SCALE GENOMIC DNA]</scope>
    <source>
        <strain>ATCC 43049 / DSM 3752 / JCM 8966 / VKM B-1809</strain>
    </source>
</reference>
<protein>
    <recommendedName>
        <fullName evidence="1">tRNA (pseudouridine(54)-N(1))-methyltransferase</fullName>
        <ecNumber evidence="1">2.1.1.257</ecNumber>
    </recommendedName>
</protein>
<keyword id="KW-0963">Cytoplasm</keyword>
<keyword id="KW-0489">Methyltransferase</keyword>
<keyword id="KW-1185">Reference proteome</keyword>
<keyword id="KW-0949">S-adenosyl-L-methionine</keyword>
<keyword id="KW-0808">Transferase</keyword>
<keyword id="KW-0819">tRNA processing</keyword>
<comment type="function">
    <text evidence="1">Specifically catalyzes the N1-methylation of pseudouridine at position 54 (Psi54) in tRNAs.</text>
</comment>
<comment type="catalytic activity">
    <reaction evidence="1">
        <text>pseudouridine(54) in tRNA + S-adenosyl-L-methionine = N(1)-methylpseudouridine(54) in tRNA + S-adenosyl-L-homocysteine + H(+)</text>
        <dbReference type="Rhea" id="RHEA:55292"/>
        <dbReference type="Rhea" id="RHEA-COMP:14140"/>
        <dbReference type="Rhea" id="RHEA-COMP:14141"/>
        <dbReference type="ChEBI" id="CHEBI:15378"/>
        <dbReference type="ChEBI" id="CHEBI:57856"/>
        <dbReference type="ChEBI" id="CHEBI:59789"/>
        <dbReference type="ChEBI" id="CHEBI:65314"/>
        <dbReference type="ChEBI" id="CHEBI:74890"/>
        <dbReference type="EC" id="2.1.1.257"/>
    </reaction>
</comment>
<comment type="subunit">
    <text evidence="1">Homodimer.</text>
</comment>
<comment type="subcellular location">
    <subcellularLocation>
        <location evidence="1">Cytoplasm</location>
    </subcellularLocation>
</comment>
<comment type="similarity">
    <text evidence="1">Belongs to the methyltransferase superfamily. TrmY family.</text>
</comment>
<gene>
    <name evidence="1" type="primary">trmY</name>
    <name type="ordered locus">rrnAC3253</name>
</gene>
<accession>Q5UXQ3</accession>
<proteinExistence type="inferred from homology"/>
<sequence>MRQFVIIGHDAPTTPEFSLDDLAGAAGRLDVLCRCVTSAFFLSHAIREDVRVHLILGDEYTVTFEGSDLRRLNPDERSTAALIRKALEEREEAIGHIPVETSPGVSLTRRGFEGTLDDVARRGTVVQLHEDGDPIVGVAPPSDPVFVLSDHHDFRDEEAALLADRADERVSLGPKALHADHSITVAHNYLDTAGFERY</sequence>
<evidence type="ECO:0000255" key="1">
    <source>
        <dbReference type="HAMAP-Rule" id="MF_00587"/>
    </source>
</evidence>
<feature type="chain" id="PRO_1000025463" description="tRNA (pseudouridine(54)-N(1))-methyltransferase">
    <location>
        <begin position="1"/>
        <end position="198"/>
    </location>
</feature>
<feature type="binding site" evidence="1">
    <location>
        <position position="128"/>
    </location>
    <ligand>
        <name>S-adenosyl-L-methionine</name>
        <dbReference type="ChEBI" id="CHEBI:59789"/>
    </ligand>
</feature>
<dbReference type="EC" id="2.1.1.257" evidence="1"/>
<dbReference type="EMBL" id="AY596297">
    <property type="protein sequence ID" value="AAV47950.1"/>
    <property type="molecule type" value="Genomic_DNA"/>
</dbReference>
<dbReference type="RefSeq" id="WP_004964221.1">
    <property type="nucleotide sequence ID" value="NZ_CP039138.1"/>
</dbReference>
<dbReference type="SMR" id="Q5UXQ3"/>
<dbReference type="STRING" id="272569.rrnAC3253"/>
<dbReference type="PaxDb" id="272569-rrnAC3253"/>
<dbReference type="EnsemblBacteria" id="AAV47950">
    <property type="protein sequence ID" value="AAV47950"/>
    <property type="gene ID" value="rrnAC3253"/>
</dbReference>
<dbReference type="GeneID" id="64823498"/>
<dbReference type="KEGG" id="hma:rrnAC3253"/>
<dbReference type="PATRIC" id="fig|272569.17.peg.3784"/>
<dbReference type="eggNOG" id="arCOG01239">
    <property type="taxonomic scope" value="Archaea"/>
</dbReference>
<dbReference type="HOGENOM" id="CLU_107018_0_0_2"/>
<dbReference type="Proteomes" id="UP000001169">
    <property type="component" value="Chromosome I"/>
</dbReference>
<dbReference type="GO" id="GO:0005737">
    <property type="term" value="C:cytoplasm"/>
    <property type="evidence" value="ECO:0007669"/>
    <property type="project" value="UniProtKB-SubCell"/>
</dbReference>
<dbReference type="GO" id="GO:0008757">
    <property type="term" value="F:S-adenosylmethionine-dependent methyltransferase activity"/>
    <property type="evidence" value="ECO:0007669"/>
    <property type="project" value="UniProtKB-UniRule"/>
</dbReference>
<dbReference type="GO" id="GO:0008175">
    <property type="term" value="F:tRNA methyltransferase activity"/>
    <property type="evidence" value="ECO:0007669"/>
    <property type="project" value="UniProtKB-UniRule"/>
</dbReference>
<dbReference type="GO" id="GO:0030488">
    <property type="term" value="P:tRNA methylation"/>
    <property type="evidence" value="ECO:0007669"/>
    <property type="project" value="UniProtKB-UniRule"/>
</dbReference>
<dbReference type="CDD" id="cd18087">
    <property type="entry name" value="TrmY-like"/>
    <property type="match status" value="1"/>
</dbReference>
<dbReference type="Gene3D" id="3.40.1280.10">
    <property type="match status" value="1"/>
</dbReference>
<dbReference type="HAMAP" id="MF_00587">
    <property type="entry name" value="tRNA_methyltr_TrmY"/>
    <property type="match status" value="1"/>
</dbReference>
<dbReference type="InterPro" id="IPR029028">
    <property type="entry name" value="Alpha/beta_knot_MTases"/>
</dbReference>
<dbReference type="InterPro" id="IPR007158">
    <property type="entry name" value="TrmY"/>
</dbReference>
<dbReference type="InterPro" id="IPR029026">
    <property type="entry name" value="tRNA_m1G_MTases_N"/>
</dbReference>
<dbReference type="NCBIfam" id="NF002560">
    <property type="entry name" value="PRK02135.1"/>
    <property type="match status" value="1"/>
</dbReference>
<dbReference type="PANTHER" id="PTHR40703">
    <property type="entry name" value="TRNA (PSEUDOURIDINE(54)-N(1))-METHYLTRANSFERASE"/>
    <property type="match status" value="1"/>
</dbReference>
<dbReference type="PANTHER" id="PTHR40703:SF1">
    <property type="entry name" value="TRNA (PSEUDOURIDINE(54)-N(1))-METHYLTRANSFERASE"/>
    <property type="match status" value="1"/>
</dbReference>
<dbReference type="Pfam" id="PF04013">
    <property type="entry name" value="Methyltrn_RNA_2"/>
    <property type="match status" value="1"/>
</dbReference>
<dbReference type="SUPFAM" id="SSF75217">
    <property type="entry name" value="alpha/beta knot"/>
    <property type="match status" value="1"/>
</dbReference>
<name>TRMY_HALMA</name>